<dbReference type="EC" id="6.2.1.14" evidence="1"/>
<dbReference type="EMBL" id="CP000745">
    <property type="protein sequence ID" value="ABR65889.1"/>
    <property type="molecule type" value="Genomic_DNA"/>
</dbReference>
<dbReference type="SMR" id="A6VHG3"/>
<dbReference type="STRING" id="426368.MmarC7_0822"/>
<dbReference type="KEGG" id="mmz:MmarC7_0822"/>
<dbReference type="eggNOG" id="arCOG05075">
    <property type="taxonomic scope" value="Archaea"/>
</dbReference>
<dbReference type="HOGENOM" id="CLU_076858_0_0_2"/>
<dbReference type="OrthoDB" id="65815at2157"/>
<dbReference type="UniPathway" id="UPA00999">
    <property type="reaction ID" value="UER00351"/>
</dbReference>
<dbReference type="GO" id="GO:0042410">
    <property type="term" value="F:6-carboxyhexanoate-CoA ligase activity"/>
    <property type="evidence" value="ECO:0007669"/>
    <property type="project" value="UniProtKB-UniRule"/>
</dbReference>
<dbReference type="GO" id="GO:0005524">
    <property type="term" value="F:ATP binding"/>
    <property type="evidence" value="ECO:0007669"/>
    <property type="project" value="UniProtKB-KW"/>
</dbReference>
<dbReference type="GO" id="GO:0000287">
    <property type="term" value="F:magnesium ion binding"/>
    <property type="evidence" value="ECO:0007669"/>
    <property type="project" value="UniProtKB-UniRule"/>
</dbReference>
<dbReference type="GO" id="GO:0009102">
    <property type="term" value="P:biotin biosynthetic process"/>
    <property type="evidence" value="ECO:0007669"/>
    <property type="project" value="UniProtKB-UniRule"/>
</dbReference>
<dbReference type="HAMAP" id="MF_00668">
    <property type="entry name" value="BioW"/>
    <property type="match status" value="1"/>
</dbReference>
<dbReference type="InterPro" id="IPR005499">
    <property type="entry name" value="BioW"/>
</dbReference>
<dbReference type="NCBIfam" id="NF002360">
    <property type="entry name" value="PRK01322.1"/>
    <property type="match status" value="1"/>
</dbReference>
<dbReference type="Pfam" id="PF03744">
    <property type="entry name" value="BioW"/>
    <property type="match status" value="1"/>
</dbReference>
<feature type="chain" id="PRO_0000412101" description="6-carboxyhexanoate--CoA ligase">
    <location>
        <begin position="1"/>
        <end position="244"/>
    </location>
</feature>
<comment type="function">
    <text evidence="1">Catalyzes the transformation of pimelate into pimeloyl-CoA with concomitant hydrolysis of ATP to AMP.</text>
</comment>
<comment type="catalytic activity">
    <reaction evidence="1">
        <text>heptanedioate + ATP + CoA = 6-carboxyhexanoyl-CoA + AMP + diphosphate</text>
        <dbReference type="Rhea" id="RHEA:14781"/>
        <dbReference type="ChEBI" id="CHEBI:30616"/>
        <dbReference type="ChEBI" id="CHEBI:33019"/>
        <dbReference type="ChEBI" id="CHEBI:36165"/>
        <dbReference type="ChEBI" id="CHEBI:57287"/>
        <dbReference type="ChEBI" id="CHEBI:57360"/>
        <dbReference type="ChEBI" id="CHEBI:456215"/>
        <dbReference type="EC" id="6.2.1.14"/>
    </reaction>
</comment>
<comment type="cofactor">
    <cofactor evidence="1">
        <name>Mg(2+)</name>
        <dbReference type="ChEBI" id="CHEBI:18420"/>
    </cofactor>
</comment>
<comment type="pathway">
    <text evidence="1">Metabolic intermediate metabolism; pimeloyl-CoA biosynthesis; pimeloyl-CoA from pimelate: step 1/1.</text>
</comment>
<comment type="subunit">
    <text evidence="1">Homodimer.</text>
</comment>
<comment type="similarity">
    <text evidence="1">Belongs to the BioW family.</text>
</comment>
<gene>
    <name evidence="1" type="primary">bioW</name>
    <name type="ordered locus">MmarC7_0822</name>
</gene>
<name>BIOW_METM7</name>
<reference key="1">
    <citation type="submission" date="2007-06" db="EMBL/GenBank/DDBJ databases">
        <title>Complete sequence of Methanococcus maripaludis C7.</title>
        <authorList>
            <consortium name="US DOE Joint Genome Institute"/>
            <person name="Copeland A."/>
            <person name="Lucas S."/>
            <person name="Lapidus A."/>
            <person name="Barry K."/>
            <person name="Glavina del Rio T."/>
            <person name="Dalin E."/>
            <person name="Tice H."/>
            <person name="Pitluck S."/>
            <person name="Clum A."/>
            <person name="Schmutz J."/>
            <person name="Larimer F."/>
            <person name="Land M."/>
            <person name="Hauser L."/>
            <person name="Kyrpides N."/>
            <person name="Anderson I."/>
            <person name="Sieprawska-Lupa M."/>
            <person name="Whitman W.B."/>
            <person name="Richardson P."/>
        </authorList>
    </citation>
    <scope>NUCLEOTIDE SEQUENCE [LARGE SCALE GENOMIC DNA]</scope>
    <source>
        <strain>C7 / ATCC BAA-1331</strain>
    </source>
</reference>
<protein>
    <recommendedName>
        <fullName evidence="1">6-carboxyhexanoate--CoA ligase</fullName>
        <ecNumber evidence="1">6.2.1.14</ecNumber>
    </recommendedName>
    <alternativeName>
        <fullName evidence="1">Pimeloyl-CoA synthase</fullName>
    </alternativeName>
</protein>
<keyword id="KW-0067">ATP-binding</keyword>
<keyword id="KW-0093">Biotin biosynthesis</keyword>
<keyword id="KW-0436">Ligase</keyword>
<keyword id="KW-0460">Magnesium</keyword>
<keyword id="KW-0547">Nucleotide-binding</keyword>
<organism>
    <name type="scientific">Methanococcus maripaludis (strain C7 / ATCC BAA-1331)</name>
    <dbReference type="NCBI Taxonomy" id="426368"/>
    <lineage>
        <taxon>Archaea</taxon>
        <taxon>Methanobacteriati</taxon>
        <taxon>Methanobacteriota</taxon>
        <taxon>Methanomada group</taxon>
        <taxon>Methanococci</taxon>
        <taxon>Methanococcales</taxon>
        <taxon>Methanococcaceae</taxon>
        <taxon>Methanococcus</taxon>
    </lineage>
</organism>
<sequence length="244" mass="27482">MFSLKMRASRNGKHVSGAERLVTEEKIEEISSELIKRAMGHENGVPDFINLKIEKVTEKINNLKHLEIKTVHSTSKETSRVIARNLLKNELEKYYLKNGKDIEKIDELIDFAFKIIDEGNMRGAAILDLDGNRLETDSNRGIRVKNIDTTDELSEKILGNSSLSERTVDAIAIATKVVNCGVISELCTSDNFSYTTGYIATKDGYFRILNLKGNGEVGGRVFFVENSKIDELYDKLENMPVIVY</sequence>
<proteinExistence type="inferred from homology"/>
<accession>A6VHG3</accession>
<evidence type="ECO:0000255" key="1">
    <source>
        <dbReference type="HAMAP-Rule" id="MF_00668"/>
    </source>
</evidence>